<gene>
    <name evidence="1" type="primary">thiI</name>
    <name type="ordered locus">PP_5045</name>
</gene>
<organism>
    <name type="scientific">Pseudomonas putida (strain ATCC 47054 / DSM 6125 / CFBP 8728 / NCIMB 11950 / KT2440)</name>
    <dbReference type="NCBI Taxonomy" id="160488"/>
    <lineage>
        <taxon>Bacteria</taxon>
        <taxon>Pseudomonadati</taxon>
        <taxon>Pseudomonadota</taxon>
        <taxon>Gammaproteobacteria</taxon>
        <taxon>Pseudomonadales</taxon>
        <taxon>Pseudomonadaceae</taxon>
        <taxon>Pseudomonas</taxon>
    </lineage>
</organism>
<evidence type="ECO:0000255" key="1">
    <source>
        <dbReference type="HAMAP-Rule" id="MF_00021"/>
    </source>
</evidence>
<protein>
    <recommendedName>
        <fullName evidence="1">tRNA sulfurtransferase</fullName>
        <ecNumber evidence="1">2.8.1.4</ecNumber>
    </recommendedName>
    <alternativeName>
        <fullName evidence="1">Sulfur carrier protein ThiS sulfurtransferase</fullName>
    </alternativeName>
    <alternativeName>
        <fullName evidence="1">Thiamine biosynthesis protein ThiI</fullName>
    </alternativeName>
    <alternativeName>
        <fullName evidence="1">tRNA 4-thiouridine synthase</fullName>
    </alternativeName>
</protein>
<name>THII_PSEPK</name>
<dbReference type="EC" id="2.8.1.4" evidence="1"/>
<dbReference type="EMBL" id="AE015451">
    <property type="protein sequence ID" value="AAN70610.1"/>
    <property type="molecule type" value="Genomic_DNA"/>
</dbReference>
<dbReference type="RefSeq" id="NP_747146.1">
    <property type="nucleotide sequence ID" value="NC_002947.4"/>
</dbReference>
<dbReference type="RefSeq" id="WP_003249221.1">
    <property type="nucleotide sequence ID" value="NZ_CP169744.1"/>
</dbReference>
<dbReference type="SMR" id="Q88CY4"/>
<dbReference type="STRING" id="160488.PP_5045"/>
<dbReference type="PaxDb" id="160488-PP_5045"/>
<dbReference type="GeneID" id="83682779"/>
<dbReference type="KEGG" id="ppu:PP_5045"/>
<dbReference type="PATRIC" id="fig|160488.4.peg.5386"/>
<dbReference type="eggNOG" id="COG0301">
    <property type="taxonomic scope" value="Bacteria"/>
</dbReference>
<dbReference type="eggNOG" id="COG0607">
    <property type="taxonomic scope" value="Bacteria"/>
</dbReference>
<dbReference type="HOGENOM" id="CLU_037952_4_1_6"/>
<dbReference type="OrthoDB" id="9773948at2"/>
<dbReference type="PhylomeDB" id="Q88CY4"/>
<dbReference type="BioCyc" id="PPUT160488:G1G01-5390-MONOMER"/>
<dbReference type="UniPathway" id="UPA00060"/>
<dbReference type="Proteomes" id="UP000000556">
    <property type="component" value="Chromosome"/>
</dbReference>
<dbReference type="GO" id="GO:0005829">
    <property type="term" value="C:cytosol"/>
    <property type="evidence" value="ECO:0007669"/>
    <property type="project" value="TreeGrafter"/>
</dbReference>
<dbReference type="GO" id="GO:0005524">
    <property type="term" value="F:ATP binding"/>
    <property type="evidence" value="ECO:0007669"/>
    <property type="project" value="UniProtKB-UniRule"/>
</dbReference>
<dbReference type="GO" id="GO:0004810">
    <property type="term" value="F:CCA tRNA nucleotidyltransferase activity"/>
    <property type="evidence" value="ECO:0007669"/>
    <property type="project" value="InterPro"/>
</dbReference>
<dbReference type="GO" id="GO:0000049">
    <property type="term" value="F:tRNA binding"/>
    <property type="evidence" value="ECO:0007669"/>
    <property type="project" value="UniProtKB-UniRule"/>
</dbReference>
<dbReference type="GO" id="GO:0140741">
    <property type="term" value="F:tRNA-uracil-4 sulfurtransferase activity"/>
    <property type="evidence" value="ECO:0007669"/>
    <property type="project" value="UniProtKB-EC"/>
</dbReference>
<dbReference type="GO" id="GO:0009228">
    <property type="term" value="P:thiamine biosynthetic process"/>
    <property type="evidence" value="ECO:0007669"/>
    <property type="project" value="UniProtKB-KW"/>
</dbReference>
<dbReference type="GO" id="GO:0009229">
    <property type="term" value="P:thiamine diphosphate biosynthetic process"/>
    <property type="evidence" value="ECO:0007669"/>
    <property type="project" value="UniProtKB-UniRule"/>
</dbReference>
<dbReference type="GO" id="GO:0052837">
    <property type="term" value="P:thiazole biosynthetic process"/>
    <property type="evidence" value="ECO:0007669"/>
    <property type="project" value="InterPro"/>
</dbReference>
<dbReference type="GO" id="GO:0002937">
    <property type="term" value="P:tRNA 4-thiouridine biosynthesis"/>
    <property type="evidence" value="ECO:0007669"/>
    <property type="project" value="TreeGrafter"/>
</dbReference>
<dbReference type="CDD" id="cd01712">
    <property type="entry name" value="PPase_ThiI"/>
    <property type="match status" value="1"/>
</dbReference>
<dbReference type="CDD" id="cd11716">
    <property type="entry name" value="THUMP_ThiI"/>
    <property type="match status" value="1"/>
</dbReference>
<dbReference type="Gene3D" id="3.30.2130.30">
    <property type="match status" value="1"/>
</dbReference>
<dbReference type="Gene3D" id="3.40.50.620">
    <property type="entry name" value="HUPs"/>
    <property type="match status" value="1"/>
</dbReference>
<dbReference type="Gene3D" id="3.40.250.10">
    <property type="entry name" value="Rhodanese-like domain"/>
    <property type="match status" value="1"/>
</dbReference>
<dbReference type="HAMAP" id="MF_00021">
    <property type="entry name" value="ThiI"/>
    <property type="match status" value="1"/>
</dbReference>
<dbReference type="InterPro" id="IPR001763">
    <property type="entry name" value="Rhodanese-like_dom"/>
</dbReference>
<dbReference type="InterPro" id="IPR036873">
    <property type="entry name" value="Rhodanese-like_dom_sf"/>
</dbReference>
<dbReference type="InterPro" id="IPR014729">
    <property type="entry name" value="Rossmann-like_a/b/a_fold"/>
</dbReference>
<dbReference type="InterPro" id="IPR020536">
    <property type="entry name" value="ThiI_AANH"/>
</dbReference>
<dbReference type="InterPro" id="IPR054173">
    <property type="entry name" value="ThiI_fer"/>
</dbReference>
<dbReference type="InterPro" id="IPR049961">
    <property type="entry name" value="ThiI_N"/>
</dbReference>
<dbReference type="InterPro" id="IPR026340">
    <property type="entry name" value="THII_Thiazole_biosynth_dom"/>
</dbReference>
<dbReference type="InterPro" id="IPR004114">
    <property type="entry name" value="THUMP_dom"/>
</dbReference>
<dbReference type="InterPro" id="IPR049962">
    <property type="entry name" value="THUMP_ThiI"/>
</dbReference>
<dbReference type="InterPro" id="IPR003720">
    <property type="entry name" value="tRNA_STrfase"/>
</dbReference>
<dbReference type="InterPro" id="IPR050102">
    <property type="entry name" value="tRNA_sulfurtransferase_ThiI"/>
</dbReference>
<dbReference type="NCBIfam" id="TIGR04271">
    <property type="entry name" value="ThiI_C_thiazole"/>
    <property type="match status" value="1"/>
</dbReference>
<dbReference type="NCBIfam" id="TIGR00342">
    <property type="entry name" value="tRNA uracil 4-sulfurtransferase ThiI"/>
    <property type="match status" value="1"/>
</dbReference>
<dbReference type="PANTHER" id="PTHR43209">
    <property type="entry name" value="TRNA SULFURTRANSFERASE"/>
    <property type="match status" value="1"/>
</dbReference>
<dbReference type="PANTHER" id="PTHR43209:SF1">
    <property type="entry name" value="TRNA SULFURTRANSFERASE"/>
    <property type="match status" value="1"/>
</dbReference>
<dbReference type="Pfam" id="PF02568">
    <property type="entry name" value="ThiI"/>
    <property type="match status" value="1"/>
</dbReference>
<dbReference type="Pfam" id="PF22025">
    <property type="entry name" value="ThiI_fer"/>
    <property type="match status" value="1"/>
</dbReference>
<dbReference type="Pfam" id="PF02926">
    <property type="entry name" value="THUMP"/>
    <property type="match status" value="1"/>
</dbReference>
<dbReference type="SMART" id="SM00981">
    <property type="entry name" value="THUMP"/>
    <property type="match status" value="1"/>
</dbReference>
<dbReference type="SUPFAM" id="SSF52402">
    <property type="entry name" value="Adenine nucleotide alpha hydrolases-like"/>
    <property type="match status" value="1"/>
</dbReference>
<dbReference type="SUPFAM" id="SSF52821">
    <property type="entry name" value="Rhodanese/Cell cycle control phosphatase"/>
    <property type="match status" value="1"/>
</dbReference>
<dbReference type="SUPFAM" id="SSF143437">
    <property type="entry name" value="THUMP domain-like"/>
    <property type="match status" value="1"/>
</dbReference>
<dbReference type="PROSITE" id="PS50206">
    <property type="entry name" value="RHODANESE_3"/>
    <property type="match status" value="1"/>
</dbReference>
<dbReference type="PROSITE" id="PS51165">
    <property type="entry name" value="THUMP"/>
    <property type="match status" value="1"/>
</dbReference>
<feature type="chain" id="PRO_0000154857" description="tRNA sulfurtransferase">
    <location>
        <begin position="1"/>
        <end position="484"/>
    </location>
</feature>
<feature type="domain" description="THUMP" evidence="1">
    <location>
        <begin position="63"/>
        <end position="167"/>
    </location>
</feature>
<feature type="domain" description="Rhodanese" evidence="1">
    <location>
        <begin position="405"/>
        <end position="483"/>
    </location>
</feature>
<feature type="active site" description="Cysteine persulfide intermediate" evidence="1">
    <location>
        <position position="457"/>
    </location>
</feature>
<feature type="binding site" evidence="1">
    <location>
        <begin position="185"/>
        <end position="186"/>
    </location>
    <ligand>
        <name>ATP</name>
        <dbReference type="ChEBI" id="CHEBI:30616"/>
    </ligand>
</feature>
<feature type="binding site" evidence="1">
    <location>
        <position position="267"/>
    </location>
    <ligand>
        <name>ATP</name>
        <dbReference type="ChEBI" id="CHEBI:30616"/>
    </ligand>
</feature>
<feature type="binding site" evidence="1">
    <location>
        <position position="289"/>
    </location>
    <ligand>
        <name>ATP</name>
        <dbReference type="ChEBI" id="CHEBI:30616"/>
    </ligand>
</feature>
<feature type="binding site" evidence="1">
    <location>
        <position position="298"/>
    </location>
    <ligand>
        <name>ATP</name>
        <dbReference type="ChEBI" id="CHEBI:30616"/>
    </ligand>
</feature>
<feature type="disulfide bond" description="Redox-active" evidence="1">
    <location>
        <begin position="346"/>
        <end position="457"/>
    </location>
</feature>
<comment type="function">
    <text evidence="1">Catalyzes the ATP-dependent transfer of a sulfur to tRNA to produce 4-thiouridine in position 8 of tRNAs, which functions as a near-UV photosensor. Also catalyzes the transfer of sulfur to the sulfur carrier protein ThiS, forming ThiS-thiocarboxylate. This is a step in the synthesis of thiazole, in the thiamine biosynthesis pathway. The sulfur is donated as persulfide by IscS.</text>
</comment>
<comment type="catalytic activity">
    <reaction evidence="1">
        <text>[ThiI sulfur-carrier protein]-S-sulfanyl-L-cysteine + a uridine in tRNA + 2 reduced [2Fe-2S]-[ferredoxin] + ATP + H(+) = [ThiI sulfur-carrier protein]-L-cysteine + a 4-thiouridine in tRNA + 2 oxidized [2Fe-2S]-[ferredoxin] + AMP + diphosphate</text>
        <dbReference type="Rhea" id="RHEA:24176"/>
        <dbReference type="Rhea" id="RHEA-COMP:10000"/>
        <dbReference type="Rhea" id="RHEA-COMP:10001"/>
        <dbReference type="Rhea" id="RHEA-COMP:13337"/>
        <dbReference type="Rhea" id="RHEA-COMP:13338"/>
        <dbReference type="Rhea" id="RHEA-COMP:13339"/>
        <dbReference type="Rhea" id="RHEA-COMP:13340"/>
        <dbReference type="ChEBI" id="CHEBI:15378"/>
        <dbReference type="ChEBI" id="CHEBI:29950"/>
        <dbReference type="ChEBI" id="CHEBI:30616"/>
        <dbReference type="ChEBI" id="CHEBI:33019"/>
        <dbReference type="ChEBI" id="CHEBI:33737"/>
        <dbReference type="ChEBI" id="CHEBI:33738"/>
        <dbReference type="ChEBI" id="CHEBI:61963"/>
        <dbReference type="ChEBI" id="CHEBI:65315"/>
        <dbReference type="ChEBI" id="CHEBI:136798"/>
        <dbReference type="ChEBI" id="CHEBI:456215"/>
        <dbReference type="EC" id="2.8.1.4"/>
    </reaction>
</comment>
<comment type="catalytic activity">
    <reaction evidence="1">
        <text>[ThiS sulfur-carrier protein]-C-terminal Gly-Gly-AMP + S-sulfanyl-L-cysteinyl-[cysteine desulfurase] + AH2 = [ThiS sulfur-carrier protein]-C-terminal-Gly-aminoethanethioate + L-cysteinyl-[cysteine desulfurase] + A + AMP + 2 H(+)</text>
        <dbReference type="Rhea" id="RHEA:43340"/>
        <dbReference type="Rhea" id="RHEA-COMP:12157"/>
        <dbReference type="Rhea" id="RHEA-COMP:12158"/>
        <dbReference type="Rhea" id="RHEA-COMP:12910"/>
        <dbReference type="Rhea" id="RHEA-COMP:19908"/>
        <dbReference type="ChEBI" id="CHEBI:13193"/>
        <dbReference type="ChEBI" id="CHEBI:15378"/>
        <dbReference type="ChEBI" id="CHEBI:17499"/>
        <dbReference type="ChEBI" id="CHEBI:29950"/>
        <dbReference type="ChEBI" id="CHEBI:61963"/>
        <dbReference type="ChEBI" id="CHEBI:90618"/>
        <dbReference type="ChEBI" id="CHEBI:232372"/>
        <dbReference type="ChEBI" id="CHEBI:456215"/>
    </reaction>
</comment>
<comment type="pathway">
    <text evidence="1">Cofactor biosynthesis; thiamine diphosphate biosynthesis.</text>
</comment>
<comment type="subcellular location">
    <subcellularLocation>
        <location evidence="1">Cytoplasm</location>
    </subcellularLocation>
</comment>
<comment type="similarity">
    <text evidence="1">Belongs to the ThiI family.</text>
</comment>
<sequence length="484" mass="54945">MKLIVKVFPEITIKSRPVRKRFIRQLGKNIRNVLKDLDPELAVDGVWDNLEVVTRVEDEKVQREMIERLTCTPGITHFLQVEEYPLGDFDDIVAKCKHHFGHLLAGKHFAVRCKRGGHHDFTSMDVDRYVGSQLRQQCGAAGIELKKPEVLVRIEIRDQRLYVIHNQHNGIGGYPLGALEQTLVLMSGGFDSTVAAYQMMRRGLMTHFCFFNLGGRAHELGVMEVAHYLWKKYGSSQRVLFISVPFEEVVGEILNKVDNSYMGVTLKRMMLRGAAHMADRLQIDALVTGEAISQVSSQTLPNLSIIDSATDKLVLRPLLASHKQDIIDQATEIGTADFAKHMPEYCGVISVNPTTHAKRHRMEHEEKQFDMAVLERALERAKFISIDHVIDELGKDIEIEEVAEALPGQIVIDIRHPDAQEDEPLVLEGIEVQAMPFYAINSKFKHLDPTRQYLLYCDKGVMSRLHAHHLLSEGHANVRVYRPT</sequence>
<keyword id="KW-0067">ATP-binding</keyword>
<keyword id="KW-0963">Cytoplasm</keyword>
<keyword id="KW-1015">Disulfide bond</keyword>
<keyword id="KW-0547">Nucleotide-binding</keyword>
<keyword id="KW-0676">Redox-active center</keyword>
<keyword id="KW-1185">Reference proteome</keyword>
<keyword id="KW-0694">RNA-binding</keyword>
<keyword id="KW-0784">Thiamine biosynthesis</keyword>
<keyword id="KW-0808">Transferase</keyword>
<keyword id="KW-0820">tRNA-binding</keyword>
<accession>Q88CY4</accession>
<proteinExistence type="inferred from homology"/>
<reference key="1">
    <citation type="journal article" date="2002" name="Environ. Microbiol.">
        <title>Complete genome sequence and comparative analysis of the metabolically versatile Pseudomonas putida KT2440.</title>
        <authorList>
            <person name="Nelson K.E."/>
            <person name="Weinel C."/>
            <person name="Paulsen I.T."/>
            <person name="Dodson R.J."/>
            <person name="Hilbert H."/>
            <person name="Martins dos Santos V.A.P."/>
            <person name="Fouts D.E."/>
            <person name="Gill S.R."/>
            <person name="Pop M."/>
            <person name="Holmes M."/>
            <person name="Brinkac L.M."/>
            <person name="Beanan M.J."/>
            <person name="DeBoy R.T."/>
            <person name="Daugherty S.C."/>
            <person name="Kolonay J.F."/>
            <person name="Madupu R."/>
            <person name="Nelson W.C."/>
            <person name="White O."/>
            <person name="Peterson J.D."/>
            <person name="Khouri H.M."/>
            <person name="Hance I."/>
            <person name="Chris Lee P."/>
            <person name="Holtzapple E.K."/>
            <person name="Scanlan D."/>
            <person name="Tran K."/>
            <person name="Moazzez A."/>
            <person name="Utterback T.R."/>
            <person name="Rizzo M."/>
            <person name="Lee K."/>
            <person name="Kosack D."/>
            <person name="Moestl D."/>
            <person name="Wedler H."/>
            <person name="Lauber J."/>
            <person name="Stjepandic D."/>
            <person name="Hoheisel J."/>
            <person name="Straetz M."/>
            <person name="Heim S."/>
            <person name="Kiewitz C."/>
            <person name="Eisen J.A."/>
            <person name="Timmis K.N."/>
            <person name="Duesterhoeft A."/>
            <person name="Tuemmler B."/>
            <person name="Fraser C.M."/>
        </authorList>
    </citation>
    <scope>NUCLEOTIDE SEQUENCE [LARGE SCALE GENOMIC DNA]</scope>
    <source>
        <strain>ATCC 47054 / DSM 6125 / CFBP 8728 / NCIMB 11950 / KT2440</strain>
    </source>
</reference>